<comment type="function">
    <text evidence="3">Broad substrate specificity glycosidase. Releases glucose from soluble glucooligomers, with a preference for longer oligomers; acts more readily on cellotetraose than on cellobiose. Displays similar activities towards the disaccharides lactose and cellobiose. Is also able to hydrolyze various aryl-beta-glycosides in vitro.</text>
</comment>
<comment type="catalytic activity">
    <reaction evidence="3">
        <text>Hydrolysis of (1-&gt;4)-linkages in (1-&gt;4)-beta-D-glucans, to remove successive glucose units.</text>
        <dbReference type="EC" id="3.2.1.74"/>
    </reaction>
</comment>
<comment type="catalytic activity">
    <reaction evidence="3">
        <text>Hydrolysis of terminal, non-reducing beta-D-glucosyl residues with release of beta-D-glucose.</text>
        <dbReference type="EC" id="3.2.1.21"/>
    </reaction>
</comment>
<comment type="activity regulation">
    <text evidence="3">Activated by glucose up to 200 mM when p-nitrophenyl-beta-glucoside is used as the substrate. This activation by end product concentrations may be due to a transglycosylation activity of the enzyme.</text>
</comment>
<comment type="biophysicochemical properties">
    <kinetics>
        <KM evidence="3">28.6 mM for cellobiose</KM>
        <KM evidence="3">4.55 mM for cellotriose</KM>
        <KM evidence="3">2.15 mM for cellotetraose</KM>
        <text>kcat is 285.0, 345.7 and 333.7 sec(-1) for the hydrolysis of cellobiose, cellotriose and cellotetraose, respectively.</text>
    </kinetics>
    <phDependence>
        <text evidence="3">Optimum pH is 6.5.</text>
    </phDependence>
    <temperatureDependence>
        <text evidence="3">Optimum temperature is 95 degrees Celsius. Is highly thermostable, retaining 85% activity after incubation for 9 hours at 90 degrees Celsius and 88% activity after 1 hour at 95 degrees Celsius.</text>
    </temperatureDependence>
</comment>
<comment type="pathway">
    <text evidence="4">Glycan metabolism; cellulose degradation.</text>
</comment>
<comment type="pathway">
    <text evidence="4">Glycan metabolism; beta-D-glucan degradation.</text>
</comment>
<comment type="subunit">
    <text evidence="3">Monomer.</text>
</comment>
<comment type="similarity">
    <text evidence="5">Belongs to the glycosyl hydrolase 1 family.</text>
</comment>
<comment type="sequence caution" evidence="5">
    <conflict type="erroneous initiation">
        <sequence resource="EMBL-CDS" id="ACM22958"/>
    </conflict>
    <text>Extended N-terminus.</text>
</comment>
<proteinExistence type="evidence at protein level"/>
<gene>
    <name evidence="4" type="primary">gghA</name>
    <name type="ordered locus">CTN_0782</name>
</gene>
<keyword id="KW-0002">3D-structure</keyword>
<keyword id="KW-0119">Carbohydrate metabolism</keyword>
<keyword id="KW-0136">Cellulose degradation</keyword>
<keyword id="KW-0903">Direct protein sequencing</keyword>
<keyword id="KW-0326">Glycosidase</keyword>
<keyword id="KW-0378">Hydrolase</keyword>
<keyword id="KW-0624">Polysaccharide degradation</keyword>
<reference key="1">
    <citation type="journal article" date="2000" name="J. Bacteriol.">
        <title>Cloning and characterization of the glucooligosaccharide catabolic pathway beta-glucan glucohydrolase and cellobiose phosphorylase in the marine hyperthermophile Thermotoga neapolitana.</title>
        <authorList>
            <person name="Yernool D.A."/>
            <person name="McCarthy J.K."/>
            <person name="Eveleigh D.E."/>
            <person name="Bok J.-D."/>
        </authorList>
    </citation>
    <scope>NUCLEOTIDE SEQUENCE [GENOMIC DNA]</scope>
    <scope>PROTEIN SEQUENCE OF 1-21</scope>
    <scope>FUNCTION</scope>
    <scope>CATALYTIC ACTIVITY</scope>
    <scope>SUBSTRATE SPECIFICITY</scope>
    <scope>ACTIVITY REGULATION</scope>
    <scope>BIOPHYSICOCHEMICAL PROPERTIES</scope>
    <scope>SUBUNIT</scope>
    <source>
        <strain>ATCC 49049 / DSM 4359 / NBRC 107923 / NS-E</strain>
    </source>
</reference>
<reference key="2">
    <citation type="submission" date="2007-11" db="EMBL/GenBank/DDBJ databases">
        <title>The genome sequence of the hyperthermophilic bacterium Thermotoga neapolitana.</title>
        <authorList>
            <person name="Lim S.K."/>
            <person name="Kim J.S."/>
            <person name="Cha S.H."/>
            <person name="Park B.C."/>
            <person name="Lee D.S."/>
            <person name="Tae H.S."/>
            <person name="Kim S.-J."/>
            <person name="Kim J.J."/>
            <person name="Park K.J."/>
            <person name="Lee S.Y."/>
        </authorList>
    </citation>
    <scope>NUCLEOTIDE SEQUENCE [LARGE SCALE GENOMIC DNA]</scope>
    <source>
        <strain>ATCC 49049 / DSM 4359 / NBRC 107923 / NS-E</strain>
    </source>
</reference>
<organism>
    <name type="scientific">Thermotoga neapolitana (strain ATCC 49049 / DSM 4359 / NBRC 107923 / NS-E)</name>
    <dbReference type="NCBI Taxonomy" id="309803"/>
    <lineage>
        <taxon>Bacteria</taxon>
        <taxon>Thermotogati</taxon>
        <taxon>Thermotogota</taxon>
        <taxon>Thermotogae</taxon>
        <taxon>Thermotogales</taxon>
        <taxon>Thermotogaceae</taxon>
        <taxon>Thermotoga</taxon>
    </lineage>
</organism>
<name>BGLA_THENN</name>
<dbReference type="EC" id="3.2.1.74" evidence="3"/>
<dbReference type="EC" id="3.2.1.21" evidence="3"/>
<dbReference type="EMBL" id="AF039487">
    <property type="protein sequence ID" value="AAB95492.2"/>
    <property type="molecule type" value="Genomic_DNA"/>
</dbReference>
<dbReference type="EMBL" id="CP000916">
    <property type="protein sequence ID" value="ACM22958.1"/>
    <property type="status" value="ALT_INIT"/>
    <property type="molecule type" value="Genomic_DNA"/>
</dbReference>
<dbReference type="PDB" id="5IDI">
    <property type="method" value="X-ray"/>
    <property type="resolution" value="1.90 A"/>
    <property type="chains" value="A/B=1-444"/>
</dbReference>
<dbReference type="PDBsum" id="5IDI"/>
<dbReference type="SMR" id="B9K7M5"/>
<dbReference type="STRING" id="309803.CTN_0782"/>
<dbReference type="CAZy" id="GH1">
    <property type="family name" value="Glycoside Hydrolase Family 1"/>
</dbReference>
<dbReference type="KEGG" id="tna:CTN_0782"/>
<dbReference type="eggNOG" id="COG2723">
    <property type="taxonomic scope" value="Bacteria"/>
</dbReference>
<dbReference type="HOGENOM" id="CLU_001859_1_3_0"/>
<dbReference type="BRENDA" id="3.2.1.21">
    <property type="organism ID" value="6332"/>
</dbReference>
<dbReference type="SABIO-RK" id="B9K7M5"/>
<dbReference type="UniPathway" id="UPA00350"/>
<dbReference type="UniPathway" id="UPA00696"/>
<dbReference type="Proteomes" id="UP000000445">
    <property type="component" value="Chromosome"/>
</dbReference>
<dbReference type="GO" id="GO:0005829">
    <property type="term" value="C:cytosol"/>
    <property type="evidence" value="ECO:0007669"/>
    <property type="project" value="TreeGrafter"/>
</dbReference>
<dbReference type="GO" id="GO:0031217">
    <property type="term" value="F:glucan 1,4-beta-glucosidase activity"/>
    <property type="evidence" value="ECO:0007669"/>
    <property type="project" value="UniProtKB-EC"/>
</dbReference>
<dbReference type="GO" id="GO:0030245">
    <property type="term" value="P:cellulose catabolic process"/>
    <property type="evidence" value="ECO:0007669"/>
    <property type="project" value="UniProtKB-UniPathway"/>
</dbReference>
<dbReference type="FunFam" id="3.20.20.80:FF:000004">
    <property type="entry name" value="Beta-glucosidase 6-phospho-beta-glucosidase"/>
    <property type="match status" value="1"/>
</dbReference>
<dbReference type="Gene3D" id="3.20.20.80">
    <property type="entry name" value="Glycosidases"/>
    <property type="match status" value="1"/>
</dbReference>
<dbReference type="InterPro" id="IPR001360">
    <property type="entry name" value="Glyco_hydro_1"/>
</dbReference>
<dbReference type="InterPro" id="IPR018120">
    <property type="entry name" value="Glyco_hydro_1_AS"/>
</dbReference>
<dbReference type="InterPro" id="IPR017736">
    <property type="entry name" value="Glyco_hydro_1_beta-glucosidase"/>
</dbReference>
<dbReference type="InterPro" id="IPR033132">
    <property type="entry name" value="Glyco_hydro_1_N_CS"/>
</dbReference>
<dbReference type="InterPro" id="IPR017853">
    <property type="entry name" value="Glycoside_hydrolase_SF"/>
</dbReference>
<dbReference type="NCBIfam" id="TIGR03356">
    <property type="entry name" value="BGL"/>
    <property type="match status" value="1"/>
</dbReference>
<dbReference type="PANTHER" id="PTHR10353">
    <property type="entry name" value="GLYCOSYL HYDROLASE"/>
    <property type="match status" value="1"/>
</dbReference>
<dbReference type="PANTHER" id="PTHR10353:SF36">
    <property type="entry name" value="LP05116P"/>
    <property type="match status" value="1"/>
</dbReference>
<dbReference type="Pfam" id="PF00232">
    <property type="entry name" value="Glyco_hydro_1"/>
    <property type="match status" value="1"/>
</dbReference>
<dbReference type="PRINTS" id="PR00131">
    <property type="entry name" value="GLHYDRLASE1"/>
</dbReference>
<dbReference type="SUPFAM" id="SSF51445">
    <property type="entry name" value="(Trans)glycosidases"/>
    <property type="match status" value="1"/>
</dbReference>
<dbReference type="PROSITE" id="PS00572">
    <property type="entry name" value="GLYCOSYL_HYDROL_F1_1"/>
    <property type="match status" value="1"/>
</dbReference>
<dbReference type="PROSITE" id="PS00653">
    <property type="entry name" value="GLYCOSYL_HYDROL_F1_2"/>
    <property type="match status" value="1"/>
</dbReference>
<feature type="chain" id="PRO_0000372089" description="1,4-beta-D-glucan glucohydrolase">
    <location>
        <begin position="1"/>
        <end position="444"/>
    </location>
</feature>
<feature type="active site" description="Proton donor" evidence="1">
    <location>
        <position position="164"/>
    </location>
</feature>
<feature type="active site" description="Nucleophile" evidence="2">
    <location>
        <position position="349"/>
    </location>
</feature>
<feature type="sequence conflict" description="In Ref. 1; AAB95492." evidence="5" ref="1">
    <original>V</original>
    <variation>G</variation>
    <location>
        <position position="436"/>
    </location>
</feature>
<feature type="strand" evidence="6">
    <location>
        <begin position="9"/>
        <end position="13"/>
    </location>
</feature>
<feature type="helix" evidence="6">
    <location>
        <begin position="16"/>
        <end position="19"/>
    </location>
</feature>
<feature type="helix" evidence="6">
    <location>
        <begin position="25"/>
        <end position="27"/>
    </location>
</feature>
<feature type="helix" evidence="6">
    <location>
        <begin position="32"/>
        <end position="37"/>
    </location>
</feature>
<feature type="helix" evidence="6">
    <location>
        <begin position="44"/>
        <end position="46"/>
    </location>
</feature>
<feature type="turn" evidence="6">
    <location>
        <begin position="49"/>
        <end position="53"/>
    </location>
</feature>
<feature type="helix" evidence="6">
    <location>
        <begin position="55"/>
        <end position="69"/>
    </location>
</feature>
<feature type="strand" evidence="6">
    <location>
        <begin position="72"/>
        <end position="77"/>
    </location>
</feature>
<feature type="helix" evidence="6">
    <location>
        <begin position="80"/>
        <end position="83"/>
    </location>
</feature>
<feature type="strand" evidence="6">
    <location>
        <begin position="87"/>
        <end position="89"/>
    </location>
</feature>
<feature type="helix" evidence="6">
    <location>
        <begin position="93"/>
        <end position="108"/>
    </location>
</feature>
<feature type="strand" evidence="6">
    <location>
        <begin position="112"/>
        <end position="120"/>
    </location>
</feature>
<feature type="helix" evidence="6">
    <location>
        <begin position="124"/>
        <end position="128"/>
    </location>
</feature>
<feature type="helix" evidence="6">
    <location>
        <begin position="131"/>
        <end position="133"/>
    </location>
</feature>
<feature type="helix" evidence="6">
    <location>
        <begin position="137"/>
        <end position="152"/>
    </location>
</feature>
<feature type="turn" evidence="6">
    <location>
        <begin position="153"/>
        <end position="155"/>
    </location>
</feature>
<feature type="strand" evidence="6">
    <location>
        <begin position="158"/>
        <end position="163"/>
    </location>
</feature>
<feature type="helix" evidence="6">
    <location>
        <begin position="165"/>
        <end position="173"/>
    </location>
</feature>
<feature type="helix" evidence="6">
    <location>
        <begin position="185"/>
        <end position="209"/>
    </location>
</feature>
<feature type="strand" evidence="6">
    <location>
        <begin position="214"/>
        <end position="219"/>
    </location>
</feature>
<feature type="strand" evidence="6">
    <location>
        <begin position="223"/>
        <end position="230"/>
    </location>
</feature>
<feature type="helix" evidence="6">
    <location>
        <begin position="231"/>
        <end position="244"/>
    </location>
</feature>
<feature type="helix" evidence="6">
    <location>
        <begin position="247"/>
        <end position="255"/>
    </location>
</feature>
<feature type="helix" evidence="6">
    <location>
        <begin position="260"/>
        <end position="266"/>
    </location>
</feature>
<feature type="helix" evidence="6">
    <location>
        <begin position="267"/>
        <end position="269"/>
    </location>
</feature>
<feature type="helix" evidence="6">
    <location>
        <begin position="274"/>
        <end position="277"/>
    </location>
</feature>
<feature type="helix" evidence="6">
    <location>
        <begin position="278"/>
        <end position="281"/>
    </location>
</feature>
<feature type="strand" evidence="6">
    <location>
        <begin position="286"/>
        <end position="291"/>
    </location>
</feature>
<feature type="strand" evidence="6">
    <location>
        <begin position="295"/>
        <end position="300"/>
    </location>
</feature>
<feature type="helix" evidence="6">
    <location>
        <begin position="305"/>
        <end position="307"/>
    </location>
</feature>
<feature type="strand" evidence="6">
    <location>
        <begin position="308"/>
        <end position="311"/>
    </location>
</feature>
<feature type="helix" evidence="6">
    <location>
        <begin position="327"/>
        <end position="340"/>
    </location>
</feature>
<feature type="strand" evidence="6">
    <location>
        <begin position="345"/>
        <end position="350"/>
    </location>
</feature>
<feature type="turn" evidence="6">
    <location>
        <begin position="360"/>
        <end position="362"/>
    </location>
</feature>
<feature type="helix" evidence="6">
    <location>
        <begin position="367"/>
        <end position="385"/>
    </location>
</feature>
<feature type="strand" evidence="6">
    <location>
        <begin position="390"/>
        <end position="396"/>
    </location>
</feature>
<feature type="helix" evidence="6">
    <location>
        <begin position="404"/>
        <end position="409"/>
    </location>
</feature>
<feature type="strand" evidence="6">
    <location>
        <begin position="414"/>
        <end position="417"/>
    </location>
</feature>
<feature type="turn" evidence="6">
    <location>
        <begin position="419"/>
        <end position="421"/>
    </location>
</feature>
<feature type="strand" evidence="6">
    <location>
        <begin position="424"/>
        <end position="426"/>
    </location>
</feature>
<feature type="helix" evidence="6">
    <location>
        <begin position="428"/>
        <end position="439"/>
    </location>
</feature>
<evidence type="ECO:0000255" key="1"/>
<evidence type="ECO:0000255" key="2">
    <source>
        <dbReference type="PROSITE-ProRule" id="PRU10055"/>
    </source>
</evidence>
<evidence type="ECO:0000269" key="3">
    <source>
    </source>
</evidence>
<evidence type="ECO:0000303" key="4">
    <source>
    </source>
</evidence>
<evidence type="ECO:0000305" key="5"/>
<evidence type="ECO:0007829" key="6">
    <source>
        <dbReference type="PDB" id="5IDI"/>
    </source>
</evidence>
<protein>
    <recommendedName>
        <fullName evidence="4">1,4-beta-D-glucan glucohydrolase</fullName>
        <shortName evidence="4">Glucan glucohydrolase</shortName>
        <ecNumber evidence="3">3.2.1.74</ecNumber>
    </recommendedName>
    <alternativeName>
        <fullName>Beta-D-glucoside glucohydrolase</fullName>
    </alternativeName>
    <alternativeName>
        <fullName>Beta-glucosidase</fullName>
        <ecNumber evidence="3">3.2.1.21</ecNumber>
    </alternativeName>
    <alternativeName>
        <fullName>Glucan 1,4-beta-glucosidase</fullName>
    </alternativeName>
</protein>
<accession>B9K7M5</accession>
<accession>O33843</accession>
<accession>O52505</accession>
<sequence length="444" mass="51535">MKKFPEGFLWGVATASYQIEGSPLADGAGMSIWHTFSHTPGNVKNGDTGDVACDHYNRWKEDIEIIEKIGAKAYRFSISWPRILPEGTGKVNQKGLDFYNRIIDTLLEKNITPFITIYHWDLPFSLQLKGGWANRDIADWFAEYSRVLFENFGDRVKHWITLNEPWVVAIVGHLYGVHAPGMKDIYVAFHTVHNLLRAHAKSVKVFRETVKDGKIGIVFNNGYFEPASEREEDIRAARFMHQFNNYPLFLNPIYRGEYPDLVLEFAREYLPRNYEDDMEEIKQEIDFVGLNYYSGHMVKYDPNSPARVSFVERNLPKTAMGWEIVPEGIYWILKGVKEEYNPQEVYITENGAAFDDVVSEGGKVHDQNRIDYLRAHIEQVWRAIQDGVPLKGYFVWSLLDNFEWAEGYSKRFGIVYVDYNTQKRIIKDSGYWYSNVIKNNGLTD</sequence>